<name>YBEY_LACJO</name>
<dbReference type="EC" id="3.1.-.-" evidence="1"/>
<dbReference type="EMBL" id="AE017198">
    <property type="protein sequence ID" value="AAS09143.1"/>
    <property type="molecule type" value="Genomic_DNA"/>
</dbReference>
<dbReference type="RefSeq" id="WP_011162140.1">
    <property type="nucleotide sequence ID" value="NC_005362.1"/>
</dbReference>
<dbReference type="SMR" id="Q74IY8"/>
<dbReference type="KEGG" id="ljo:LJ_1323"/>
<dbReference type="PATRIC" id="fig|257314.6.peg.1191"/>
<dbReference type="eggNOG" id="COG0319">
    <property type="taxonomic scope" value="Bacteria"/>
</dbReference>
<dbReference type="HOGENOM" id="CLU_106710_3_0_9"/>
<dbReference type="Proteomes" id="UP000000581">
    <property type="component" value="Chromosome"/>
</dbReference>
<dbReference type="GO" id="GO:0005737">
    <property type="term" value="C:cytoplasm"/>
    <property type="evidence" value="ECO:0007669"/>
    <property type="project" value="UniProtKB-SubCell"/>
</dbReference>
<dbReference type="GO" id="GO:0004222">
    <property type="term" value="F:metalloendopeptidase activity"/>
    <property type="evidence" value="ECO:0007669"/>
    <property type="project" value="InterPro"/>
</dbReference>
<dbReference type="GO" id="GO:0004521">
    <property type="term" value="F:RNA endonuclease activity"/>
    <property type="evidence" value="ECO:0007669"/>
    <property type="project" value="UniProtKB-UniRule"/>
</dbReference>
<dbReference type="GO" id="GO:0008270">
    <property type="term" value="F:zinc ion binding"/>
    <property type="evidence" value="ECO:0007669"/>
    <property type="project" value="UniProtKB-UniRule"/>
</dbReference>
<dbReference type="GO" id="GO:0006364">
    <property type="term" value="P:rRNA processing"/>
    <property type="evidence" value="ECO:0007669"/>
    <property type="project" value="UniProtKB-UniRule"/>
</dbReference>
<dbReference type="Gene3D" id="3.40.390.30">
    <property type="entry name" value="Metalloproteases ('zincins'), catalytic domain"/>
    <property type="match status" value="1"/>
</dbReference>
<dbReference type="HAMAP" id="MF_00009">
    <property type="entry name" value="Endoribonucl_YbeY"/>
    <property type="match status" value="1"/>
</dbReference>
<dbReference type="InterPro" id="IPR023091">
    <property type="entry name" value="MetalPrtase_cat_dom_sf_prd"/>
</dbReference>
<dbReference type="InterPro" id="IPR002036">
    <property type="entry name" value="YbeY"/>
</dbReference>
<dbReference type="InterPro" id="IPR020549">
    <property type="entry name" value="YbeY_CS"/>
</dbReference>
<dbReference type="NCBIfam" id="TIGR00043">
    <property type="entry name" value="rRNA maturation RNase YbeY"/>
    <property type="match status" value="1"/>
</dbReference>
<dbReference type="PANTHER" id="PTHR46986">
    <property type="entry name" value="ENDORIBONUCLEASE YBEY, CHLOROPLASTIC"/>
    <property type="match status" value="1"/>
</dbReference>
<dbReference type="PANTHER" id="PTHR46986:SF1">
    <property type="entry name" value="ENDORIBONUCLEASE YBEY, CHLOROPLASTIC"/>
    <property type="match status" value="1"/>
</dbReference>
<dbReference type="Pfam" id="PF02130">
    <property type="entry name" value="YbeY"/>
    <property type="match status" value="1"/>
</dbReference>
<dbReference type="SUPFAM" id="SSF55486">
    <property type="entry name" value="Metalloproteases ('zincins'), catalytic domain"/>
    <property type="match status" value="1"/>
</dbReference>
<dbReference type="PROSITE" id="PS01306">
    <property type="entry name" value="UPF0054"/>
    <property type="match status" value="1"/>
</dbReference>
<reference key="1">
    <citation type="journal article" date="2004" name="Proc. Natl. Acad. Sci. U.S.A.">
        <title>The genome sequence of the probiotic intestinal bacterium Lactobacillus johnsonii NCC 533.</title>
        <authorList>
            <person name="Pridmore R.D."/>
            <person name="Berger B."/>
            <person name="Desiere F."/>
            <person name="Vilanova D."/>
            <person name="Barretto C."/>
            <person name="Pittet A.-C."/>
            <person name="Zwahlen M.-C."/>
            <person name="Rouvet M."/>
            <person name="Altermann E."/>
            <person name="Barrangou R."/>
            <person name="Mollet B."/>
            <person name="Mercenier A."/>
            <person name="Klaenhammer T."/>
            <person name="Arigoni F."/>
            <person name="Schell M.A."/>
        </authorList>
    </citation>
    <scope>NUCLEOTIDE SEQUENCE [LARGE SCALE GENOMIC DNA]</scope>
    <source>
        <strain>CNCM I-1225 / La1 / NCC 533</strain>
    </source>
</reference>
<organism>
    <name type="scientific">Lactobacillus johnsonii (strain CNCM I-12250 / La1 / NCC 533)</name>
    <dbReference type="NCBI Taxonomy" id="257314"/>
    <lineage>
        <taxon>Bacteria</taxon>
        <taxon>Bacillati</taxon>
        <taxon>Bacillota</taxon>
        <taxon>Bacilli</taxon>
        <taxon>Lactobacillales</taxon>
        <taxon>Lactobacillaceae</taxon>
        <taxon>Lactobacillus</taxon>
    </lineage>
</organism>
<evidence type="ECO:0000255" key="1">
    <source>
        <dbReference type="HAMAP-Rule" id="MF_00009"/>
    </source>
</evidence>
<proteinExistence type="inferred from homology"/>
<keyword id="KW-0963">Cytoplasm</keyword>
<keyword id="KW-0255">Endonuclease</keyword>
<keyword id="KW-0378">Hydrolase</keyword>
<keyword id="KW-0479">Metal-binding</keyword>
<keyword id="KW-0540">Nuclease</keyword>
<keyword id="KW-0690">Ribosome biogenesis</keyword>
<keyword id="KW-0698">rRNA processing</keyword>
<keyword id="KW-0862">Zinc</keyword>
<accession>Q74IY8</accession>
<gene>
    <name evidence="1" type="primary">ybeY</name>
    <name type="ordered locus">LJ_1323</name>
</gene>
<comment type="function">
    <text evidence="1">Single strand-specific metallo-endoribonuclease involved in late-stage 70S ribosome quality control and in maturation of the 3' terminus of the 16S rRNA.</text>
</comment>
<comment type="cofactor">
    <cofactor evidence="1">
        <name>Zn(2+)</name>
        <dbReference type="ChEBI" id="CHEBI:29105"/>
    </cofactor>
    <text evidence="1">Binds 1 zinc ion.</text>
</comment>
<comment type="subcellular location">
    <subcellularLocation>
        <location evidence="1">Cytoplasm</location>
    </subcellularLocation>
</comment>
<comment type="similarity">
    <text evidence="1">Belongs to the endoribonuclease YbeY family.</text>
</comment>
<sequence length="175" mass="20350">MNNLDISFNDEVNFLKDSDKDWITWISNLLLSAKKEIHKENTQEMSINFVSSKKIHEINKKYRGKDRPTDVISFAIEDGLDEDFISAFSDDPDFVEDIGDLFLCPEVIKRHSVEYETGFNREFGYTLVHGYLHLNGYDHIEDDEAKVMFGIQGKVLREYGLPLHPDQENHGKQIH</sequence>
<protein>
    <recommendedName>
        <fullName evidence="1">Endoribonuclease YbeY</fullName>
        <ecNumber evidence="1">3.1.-.-</ecNumber>
    </recommendedName>
</protein>
<feature type="chain" id="PRO_0000102470" description="Endoribonuclease YbeY">
    <location>
        <begin position="1"/>
        <end position="175"/>
    </location>
</feature>
<feature type="binding site" evidence="1">
    <location>
        <position position="129"/>
    </location>
    <ligand>
        <name>Zn(2+)</name>
        <dbReference type="ChEBI" id="CHEBI:29105"/>
        <note>catalytic</note>
    </ligand>
</feature>
<feature type="binding site" evidence="1">
    <location>
        <position position="133"/>
    </location>
    <ligand>
        <name>Zn(2+)</name>
        <dbReference type="ChEBI" id="CHEBI:29105"/>
        <note>catalytic</note>
    </ligand>
</feature>
<feature type="binding site" evidence="1">
    <location>
        <position position="139"/>
    </location>
    <ligand>
        <name>Zn(2+)</name>
        <dbReference type="ChEBI" id="CHEBI:29105"/>
        <note>catalytic</note>
    </ligand>
</feature>